<keyword id="KW-0119">Carbohydrate metabolism</keyword>
<keyword id="KW-0961">Cell wall biogenesis/degradation</keyword>
<keyword id="KW-0325">Glycoprotein</keyword>
<keyword id="KW-0326">Glycosidase</keyword>
<keyword id="KW-0378">Hydrolase</keyword>
<keyword id="KW-0624">Polysaccharide degradation</keyword>
<keyword id="KW-0677">Repeat</keyword>
<keyword id="KW-0964">Secreted</keyword>
<keyword id="KW-0732">Signal</keyword>
<proteinExistence type="inferred from homology"/>
<feature type="signal peptide" evidence="2">
    <location>
        <begin position="1"/>
        <end position="18"/>
    </location>
</feature>
<feature type="chain" id="PRO_0000394697" description="Probable endo-xylogalacturonan hydrolase A">
    <location>
        <begin position="19"/>
        <end position="406"/>
    </location>
</feature>
<feature type="repeat" description="PbH1 1">
    <location>
        <begin position="183"/>
        <end position="213"/>
    </location>
</feature>
<feature type="repeat" description="PbH1 2">
    <location>
        <begin position="214"/>
        <end position="235"/>
    </location>
</feature>
<feature type="repeat" description="PbH1 3">
    <location>
        <begin position="237"/>
        <end position="257"/>
    </location>
</feature>
<feature type="repeat" description="PbH1 4">
    <location>
        <begin position="266"/>
        <end position="289"/>
    </location>
</feature>
<feature type="repeat" description="PbH1 5">
    <location>
        <begin position="299"/>
        <end position="320"/>
    </location>
</feature>
<feature type="repeat" description="PbH1 6">
    <location>
        <begin position="368"/>
        <end position="390"/>
    </location>
</feature>
<feature type="region of interest" description="Disordered" evidence="4">
    <location>
        <begin position="20"/>
        <end position="49"/>
    </location>
</feature>
<feature type="active site" description="Proton donor" evidence="3">
    <location>
        <position position="228"/>
    </location>
</feature>
<feature type="active site" evidence="3">
    <location>
        <position position="251"/>
    </location>
</feature>
<feature type="glycosylation site" description="N-linked (GlcNAc...) asparagine" evidence="2">
    <location>
        <position position="244"/>
    </location>
</feature>
<feature type="glycosylation site" description="N-linked (GlcNAc...) asparagine" evidence="2">
    <location>
        <position position="273"/>
    </location>
</feature>
<feature type="glycosylation site" description="N-linked (GlcNAc...) asparagine" evidence="2">
    <location>
        <position position="278"/>
    </location>
</feature>
<feature type="glycosylation site" description="N-linked (GlcNAc...) asparagine" evidence="2">
    <location>
        <position position="301"/>
    </location>
</feature>
<gene>
    <name type="primary">xghA</name>
    <name type="ORF">AFLA_001420</name>
</gene>
<sequence>MISLNSIFLLSLVGLSRAAPSRSETSPDRTIKPRAACTPTAGGSSSTDDVPAIQEAITSCGDGGTIVIPADTTYYLNSVLDFKGCSNCDFQVEGLLQFTSSTDYWNGKTAMISVSDIDGLKLRSVTGSGVIDGNGQESWDKFAEDSSYKRPTLLYITGGSNIEVSGLRQKNPPNVFISVKGDTSNAQFTSLTMDATSNSDNLPKNTDAFDIGASTYVTISSVAITNDDDCVAFKPGANYVTVENVSCTGSHGISVGSLGKSSDDTVQNVYARNITMINSSKAAGIKTYPSGGDHGLSTVKNATFEDFIVDGCDYAFQIQSCYGEDDTYCEENPGDAVLEGIVVKGFTGTTSDKEDPVVANLNCGSKGTCDVTISGFEVKAPSGDAKILCGNTPSDLGVTCSSGASG</sequence>
<organism>
    <name type="scientific">Aspergillus flavus (strain ATCC 200026 / FGSC A1120 / IAM 13836 / NRRL 3357 / JCM 12722 / SRRC 167)</name>
    <dbReference type="NCBI Taxonomy" id="332952"/>
    <lineage>
        <taxon>Eukaryota</taxon>
        <taxon>Fungi</taxon>
        <taxon>Dikarya</taxon>
        <taxon>Ascomycota</taxon>
        <taxon>Pezizomycotina</taxon>
        <taxon>Eurotiomycetes</taxon>
        <taxon>Eurotiomycetidae</taxon>
        <taxon>Eurotiales</taxon>
        <taxon>Aspergillaceae</taxon>
        <taxon>Aspergillus</taxon>
        <taxon>Aspergillus subgen. Circumdati</taxon>
    </lineage>
</organism>
<accession>B8NPS8</accession>
<comment type="function">
    <text evidence="1">Pectinolytic enzyme involved in the degradation of xylogalacturonan (xga), a galacturonan backbone heavily substituted with xylose, and which is one important component of the hairy regions of pectin. Activity requires a galacturonic acid backbone substituted with xylose (By similarity).</text>
</comment>
<comment type="subcellular location">
    <subcellularLocation>
        <location evidence="1">Secreted</location>
    </subcellularLocation>
</comment>
<comment type="similarity">
    <text evidence="5">Belongs to the glycosyl hydrolase 28 family.</text>
</comment>
<protein>
    <recommendedName>
        <fullName>Probable endo-xylogalacturonan hydrolase A</fullName>
        <ecNumber>3.2.1.-</ecNumber>
    </recommendedName>
</protein>
<reference key="1">
    <citation type="journal article" date="2015" name="Genome Announc.">
        <title>Genome sequence of Aspergillus flavus NRRL 3357, a strain that causes aflatoxin contamination of food and feed.</title>
        <authorList>
            <person name="Nierman W.C."/>
            <person name="Yu J."/>
            <person name="Fedorova-Abrams N.D."/>
            <person name="Losada L."/>
            <person name="Cleveland T.E."/>
            <person name="Bhatnagar D."/>
            <person name="Bennett J.W."/>
            <person name="Dean R."/>
            <person name="Payne G.A."/>
        </authorList>
    </citation>
    <scope>NUCLEOTIDE SEQUENCE [LARGE SCALE GENOMIC DNA]</scope>
    <source>
        <strain>ATCC 200026 / FGSC A1120 / IAM 13836 / NRRL 3357 / JCM 12722 / SRRC 167</strain>
    </source>
</reference>
<name>XGHA_ASPFN</name>
<dbReference type="EC" id="3.2.1.-"/>
<dbReference type="EMBL" id="EQ963482">
    <property type="protein sequence ID" value="EED47501.1"/>
    <property type="molecule type" value="Genomic_DNA"/>
</dbReference>
<dbReference type="RefSeq" id="XP_002382343.1">
    <property type="nucleotide sequence ID" value="XM_002382302.1"/>
</dbReference>
<dbReference type="SMR" id="B8NPS8"/>
<dbReference type="STRING" id="332952.B8NPS8"/>
<dbReference type="GlyCosmos" id="B8NPS8">
    <property type="glycosylation" value="4 sites, No reported glycans"/>
</dbReference>
<dbReference type="EnsemblFungi" id="EED47501">
    <property type="protein sequence ID" value="EED47501"/>
    <property type="gene ID" value="AFLA_001420"/>
</dbReference>
<dbReference type="VEuPathDB" id="FungiDB:AFLA_011463"/>
<dbReference type="eggNOG" id="ENOG502QTHU">
    <property type="taxonomic scope" value="Eukaryota"/>
</dbReference>
<dbReference type="HOGENOM" id="CLU_016031_1_3_1"/>
<dbReference type="OMA" id="FKPGANY"/>
<dbReference type="GO" id="GO:0005576">
    <property type="term" value="C:extracellular region"/>
    <property type="evidence" value="ECO:0007669"/>
    <property type="project" value="UniProtKB-SubCell"/>
</dbReference>
<dbReference type="GO" id="GO:0004650">
    <property type="term" value="F:polygalacturonase activity"/>
    <property type="evidence" value="ECO:0007669"/>
    <property type="project" value="InterPro"/>
</dbReference>
<dbReference type="GO" id="GO:0071555">
    <property type="term" value="P:cell wall organization"/>
    <property type="evidence" value="ECO:0007669"/>
    <property type="project" value="UniProtKB-KW"/>
</dbReference>
<dbReference type="GO" id="GO:0000272">
    <property type="term" value="P:polysaccharide catabolic process"/>
    <property type="evidence" value="ECO:0007669"/>
    <property type="project" value="UniProtKB-KW"/>
</dbReference>
<dbReference type="Gene3D" id="2.160.20.10">
    <property type="entry name" value="Single-stranded right-handed beta-helix, Pectin lyase-like"/>
    <property type="match status" value="1"/>
</dbReference>
<dbReference type="InterPro" id="IPR000743">
    <property type="entry name" value="Glyco_hydro_28"/>
</dbReference>
<dbReference type="InterPro" id="IPR012334">
    <property type="entry name" value="Pectin_lyas_fold"/>
</dbReference>
<dbReference type="InterPro" id="IPR011050">
    <property type="entry name" value="Pectin_lyase_fold/virulence"/>
</dbReference>
<dbReference type="PANTHER" id="PTHR31736">
    <property type="match status" value="1"/>
</dbReference>
<dbReference type="PANTHER" id="PTHR31736:SF9">
    <property type="entry name" value="ENDO-XYLOGALACTURONAN HYDROLASE A-RELATED"/>
    <property type="match status" value="1"/>
</dbReference>
<dbReference type="Pfam" id="PF00295">
    <property type="entry name" value="Glyco_hydro_28"/>
    <property type="match status" value="1"/>
</dbReference>
<dbReference type="SUPFAM" id="SSF51126">
    <property type="entry name" value="Pectin lyase-like"/>
    <property type="match status" value="1"/>
</dbReference>
<dbReference type="PROSITE" id="PS00502">
    <property type="entry name" value="POLYGALACTURONASE"/>
    <property type="match status" value="1"/>
</dbReference>
<evidence type="ECO:0000250" key="1"/>
<evidence type="ECO:0000255" key="2"/>
<evidence type="ECO:0000255" key="3">
    <source>
        <dbReference type="PROSITE-ProRule" id="PRU10052"/>
    </source>
</evidence>
<evidence type="ECO:0000256" key="4">
    <source>
        <dbReference type="SAM" id="MobiDB-lite"/>
    </source>
</evidence>
<evidence type="ECO:0000305" key="5"/>